<accession>A7I807</accession>
<evidence type="ECO:0000255" key="1">
    <source>
        <dbReference type="HAMAP-Rule" id="MF_00085"/>
    </source>
</evidence>
<reference key="1">
    <citation type="journal article" date="2015" name="Microbiology">
        <title>Genome of Methanoregula boonei 6A8 reveals adaptations to oligotrophic peatland environments.</title>
        <authorList>
            <person name="Braeuer S."/>
            <person name="Cadillo-Quiroz H."/>
            <person name="Kyrpides N."/>
            <person name="Woyke T."/>
            <person name="Goodwin L."/>
            <person name="Detter C."/>
            <person name="Podell S."/>
            <person name="Yavitt J.B."/>
            <person name="Zinder S.H."/>
        </authorList>
    </citation>
    <scope>NUCLEOTIDE SEQUENCE [LARGE SCALE GENOMIC DNA]</scope>
    <source>
        <strain>DSM 21154 / JCM 14090 / 6A8</strain>
    </source>
</reference>
<keyword id="KW-0963">Cytoplasm</keyword>
<keyword id="KW-0385">Hypusine</keyword>
<keyword id="KW-0396">Initiation factor</keyword>
<keyword id="KW-0648">Protein biosynthesis</keyword>
<keyword id="KW-1185">Reference proteome</keyword>
<organism>
    <name type="scientific">Methanoregula boonei (strain DSM 21154 / JCM 14090 / 6A8)</name>
    <dbReference type="NCBI Taxonomy" id="456442"/>
    <lineage>
        <taxon>Archaea</taxon>
        <taxon>Methanobacteriati</taxon>
        <taxon>Methanobacteriota</taxon>
        <taxon>Stenosarchaea group</taxon>
        <taxon>Methanomicrobia</taxon>
        <taxon>Methanomicrobiales</taxon>
        <taxon>Methanoregulaceae</taxon>
        <taxon>Methanoregula</taxon>
    </lineage>
</organism>
<feature type="chain" id="PRO_1000007909" description="Translation initiation factor 5A">
    <location>
        <begin position="1"/>
        <end position="125"/>
    </location>
</feature>
<feature type="modified residue" description="Hypusine" evidence="1">
    <location>
        <position position="35"/>
    </location>
</feature>
<proteinExistence type="inferred from homology"/>
<protein>
    <recommendedName>
        <fullName evidence="1">Translation initiation factor 5A</fullName>
    </recommendedName>
    <alternativeName>
        <fullName evidence="1">Hypusine-containing protein</fullName>
    </alternativeName>
    <alternativeName>
        <fullName evidence="1">eIF-5A</fullName>
    </alternativeName>
</protein>
<comment type="function">
    <text evidence="1">Functions by promoting the formation of the first peptide bond.</text>
</comment>
<comment type="subcellular location">
    <subcellularLocation>
        <location evidence="1">Cytoplasm</location>
    </subcellularLocation>
</comment>
<comment type="similarity">
    <text evidence="1">Belongs to the eIF-5A family.</text>
</comment>
<sequence>MKEQTEIGKIKEGRYIVIDEEPCKVVGLATSKPGKHGAAKARIDAVGIFDGVKRSIVSPVSAKTYVPVVERKSGQVISIAGDMAQLMDMKDYSNFEIAIPEDKKGTLEVGKEIMYIESMGKRKLD</sequence>
<gene>
    <name type="primary">eIF5A</name>
    <name type="ordered locus">Mboo_1350</name>
</gene>
<name>IF5A_METB6</name>
<dbReference type="EMBL" id="CP000780">
    <property type="protein sequence ID" value="ABS55868.1"/>
    <property type="molecule type" value="Genomic_DNA"/>
</dbReference>
<dbReference type="RefSeq" id="WP_012106901.1">
    <property type="nucleotide sequence ID" value="NC_009712.1"/>
</dbReference>
<dbReference type="SMR" id="A7I807"/>
<dbReference type="STRING" id="456442.Mboo_1350"/>
<dbReference type="GeneID" id="5410286"/>
<dbReference type="KEGG" id="mbn:Mboo_1350"/>
<dbReference type="eggNOG" id="arCOG04277">
    <property type="taxonomic scope" value="Archaea"/>
</dbReference>
<dbReference type="HOGENOM" id="CLU_102600_3_0_2"/>
<dbReference type="OrthoDB" id="23689at2157"/>
<dbReference type="Proteomes" id="UP000002408">
    <property type="component" value="Chromosome"/>
</dbReference>
<dbReference type="GO" id="GO:0005737">
    <property type="term" value="C:cytoplasm"/>
    <property type="evidence" value="ECO:0007669"/>
    <property type="project" value="UniProtKB-SubCell"/>
</dbReference>
<dbReference type="GO" id="GO:0043022">
    <property type="term" value="F:ribosome binding"/>
    <property type="evidence" value="ECO:0007669"/>
    <property type="project" value="InterPro"/>
</dbReference>
<dbReference type="GO" id="GO:0003723">
    <property type="term" value="F:RNA binding"/>
    <property type="evidence" value="ECO:0007669"/>
    <property type="project" value="InterPro"/>
</dbReference>
<dbReference type="GO" id="GO:0003746">
    <property type="term" value="F:translation elongation factor activity"/>
    <property type="evidence" value="ECO:0007669"/>
    <property type="project" value="InterPro"/>
</dbReference>
<dbReference type="GO" id="GO:0003743">
    <property type="term" value="F:translation initiation factor activity"/>
    <property type="evidence" value="ECO:0007669"/>
    <property type="project" value="UniProtKB-UniRule"/>
</dbReference>
<dbReference type="GO" id="GO:0045901">
    <property type="term" value="P:positive regulation of translational elongation"/>
    <property type="evidence" value="ECO:0007669"/>
    <property type="project" value="InterPro"/>
</dbReference>
<dbReference type="GO" id="GO:0045905">
    <property type="term" value="P:positive regulation of translational termination"/>
    <property type="evidence" value="ECO:0007669"/>
    <property type="project" value="InterPro"/>
</dbReference>
<dbReference type="CDD" id="cd04467">
    <property type="entry name" value="S1_aIF5A"/>
    <property type="match status" value="1"/>
</dbReference>
<dbReference type="Gene3D" id="2.30.30.30">
    <property type="match status" value="1"/>
</dbReference>
<dbReference type="Gene3D" id="2.40.50.140">
    <property type="entry name" value="Nucleic acid-binding proteins"/>
    <property type="match status" value="1"/>
</dbReference>
<dbReference type="HAMAP" id="MF_00085">
    <property type="entry name" value="eIF_5A"/>
    <property type="match status" value="1"/>
</dbReference>
<dbReference type="InterPro" id="IPR001884">
    <property type="entry name" value="IF5A-like"/>
</dbReference>
<dbReference type="InterPro" id="IPR048670">
    <property type="entry name" value="IF5A-like_N"/>
</dbReference>
<dbReference type="InterPro" id="IPR012340">
    <property type="entry name" value="NA-bd_OB-fold"/>
</dbReference>
<dbReference type="InterPro" id="IPR014722">
    <property type="entry name" value="Rib_uL2_dom2"/>
</dbReference>
<dbReference type="InterPro" id="IPR019769">
    <property type="entry name" value="Trans_elong_IF5A_hypusine_site"/>
</dbReference>
<dbReference type="InterPro" id="IPR022847">
    <property type="entry name" value="Transl_elong_IF5A_arc"/>
</dbReference>
<dbReference type="InterPro" id="IPR020189">
    <property type="entry name" value="Transl_elong_IF5A_C"/>
</dbReference>
<dbReference type="InterPro" id="IPR008991">
    <property type="entry name" value="Translation_prot_SH3-like_sf"/>
</dbReference>
<dbReference type="NCBIfam" id="TIGR00037">
    <property type="entry name" value="eIF_5A"/>
    <property type="match status" value="1"/>
</dbReference>
<dbReference type="NCBIfam" id="NF003076">
    <property type="entry name" value="PRK03999.1"/>
    <property type="match status" value="1"/>
</dbReference>
<dbReference type="PANTHER" id="PTHR11673">
    <property type="entry name" value="TRANSLATION INITIATION FACTOR 5A FAMILY MEMBER"/>
    <property type="match status" value="1"/>
</dbReference>
<dbReference type="Pfam" id="PF01287">
    <property type="entry name" value="eIF-5a"/>
    <property type="match status" value="1"/>
</dbReference>
<dbReference type="Pfam" id="PF21485">
    <property type="entry name" value="IF5A-like_N"/>
    <property type="match status" value="1"/>
</dbReference>
<dbReference type="PIRSF" id="PIRSF003025">
    <property type="entry name" value="eIF5A"/>
    <property type="match status" value="1"/>
</dbReference>
<dbReference type="SMART" id="SM01376">
    <property type="entry name" value="eIF-5a"/>
    <property type="match status" value="1"/>
</dbReference>
<dbReference type="SUPFAM" id="SSF50249">
    <property type="entry name" value="Nucleic acid-binding proteins"/>
    <property type="match status" value="1"/>
</dbReference>
<dbReference type="SUPFAM" id="SSF50104">
    <property type="entry name" value="Translation proteins SH3-like domain"/>
    <property type="match status" value="1"/>
</dbReference>
<dbReference type="PROSITE" id="PS00302">
    <property type="entry name" value="IF5A_HYPUSINE"/>
    <property type="match status" value="1"/>
</dbReference>